<reference key="1">
    <citation type="journal article" date="2007" name="Theor. Appl. Genet.">
        <title>Complete chloroplast genome sequences of Hordeum vulgare, Sorghum bicolor and Agrostis stolonifera, and comparative analyses with other grass genomes.</title>
        <authorList>
            <person name="Saski C."/>
            <person name="Lee S.-B."/>
            <person name="Fjellheim S."/>
            <person name="Guda C."/>
            <person name="Jansen R.K."/>
            <person name="Luo H."/>
            <person name="Tomkins J."/>
            <person name="Rognli O.A."/>
            <person name="Daniell H."/>
            <person name="Clarke J.L."/>
        </authorList>
    </citation>
    <scope>NUCLEOTIDE SEQUENCE [LARGE SCALE GENOMIC DNA]</scope>
    <source>
        <strain>cv. Penn A-4</strain>
    </source>
</reference>
<geneLocation type="chloroplast"/>
<protein>
    <recommendedName>
        <fullName evidence="1">ATP synthase subunit a, chloroplastic</fullName>
    </recommendedName>
    <alternativeName>
        <fullName evidence="1">ATP synthase F0 sector subunit a</fullName>
    </alternativeName>
    <alternativeName>
        <fullName evidence="1">F-ATPase subunit IV</fullName>
    </alternativeName>
</protein>
<organism>
    <name type="scientific">Agrostis stolonifera</name>
    <name type="common">Creeping bentgrass</name>
    <dbReference type="NCBI Taxonomy" id="63632"/>
    <lineage>
        <taxon>Eukaryota</taxon>
        <taxon>Viridiplantae</taxon>
        <taxon>Streptophyta</taxon>
        <taxon>Embryophyta</taxon>
        <taxon>Tracheophyta</taxon>
        <taxon>Spermatophyta</taxon>
        <taxon>Magnoliopsida</taxon>
        <taxon>Liliopsida</taxon>
        <taxon>Poales</taxon>
        <taxon>Poaceae</taxon>
        <taxon>BOP clade</taxon>
        <taxon>Pooideae</taxon>
        <taxon>Poodae</taxon>
        <taxon>Poeae</taxon>
        <taxon>Poeae Chloroplast Group 1 (Aveneae type)</taxon>
        <taxon>Agrostidodinae</taxon>
        <taxon>Agrostidinae</taxon>
        <taxon>Agrostis</taxon>
    </lineage>
</organism>
<feature type="chain" id="PRO_0000362527" description="ATP synthase subunit a, chloroplastic">
    <location>
        <begin position="1"/>
        <end position="247"/>
    </location>
</feature>
<feature type="transmembrane region" description="Helical" evidence="1">
    <location>
        <begin position="38"/>
        <end position="58"/>
    </location>
</feature>
<feature type="transmembrane region" description="Helical" evidence="1">
    <location>
        <begin position="95"/>
        <end position="115"/>
    </location>
</feature>
<feature type="transmembrane region" description="Helical" evidence="1">
    <location>
        <begin position="134"/>
        <end position="154"/>
    </location>
</feature>
<feature type="transmembrane region" description="Helical" evidence="1">
    <location>
        <begin position="199"/>
        <end position="219"/>
    </location>
</feature>
<feature type="transmembrane region" description="Helical" evidence="1">
    <location>
        <begin position="220"/>
        <end position="240"/>
    </location>
</feature>
<sequence length="247" mass="27292">MNIIPCSIKTLKGLYDISGVEVGQHFYWQIGGFQIHAQVLITSWVVITILLGSVVIAVRNPQTIPTDGQNFFEYVLEFIRDLSKTQIGEEYGPWVPFIGTMFLFIFVSNWSGALLPWKIIELPHGELAAPTNDINTTVALALLTSAAYFYAGLSKKGLSYFEKYIKPTPILLPINILEDFTKPLSLSFRLFGNILADELVVVVLVSLVPLVVPIPVMFLGLFTSGIQALIFATLAAAYIGESMEGHH</sequence>
<name>ATPI_AGRST</name>
<accession>A1EA02</accession>
<evidence type="ECO:0000255" key="1">
    <source>
        <dbReference type="HAMAP-Rule" id="MF_01393"/>
    </source>
</evidence>
<keyword id="KW-0066">ATP synthesis</keyword>
<keyword id="KW-0138">CF(0)</keyword>
<keyword id="KW-0150">Chloroplast</keyword>
<keyword id="KW-0375">Hydrogen ion transport</keyword>
<keyword id="KW-0406">Ion transport</keyword>
<keyword id="KW-0472">Membrane</keyword>
<keyword id="KW-0934">Plastid</keyword>
<keyword id="KW-0793">Thylakoid</keyword>
<keyword id="KW-0812">Transmembrane</keyword>
<keyword id="KW-1133">Transmembrane helix</keyword>
<keyword id="KW-0813">Transport</keyword>
<dbReference type="EMBL" id="EF115543">
    <property type="protein sequence ID" value="ABK79574.1"/>
    <property type="molecule type" value="Genomic_DNA"/>
</dbReference>
<dbReference type="RefSeq" id="YP_874730.1">
    <property type="nucleotide sequence ID" value="NC_008591.1"/>
</dbReference>
<dbReference type="SMR" id="A1EA02"/>
<dbReference type="GeneID" id="4524924"/>
<dbReference type="GO" id="GO:0009535">
    <property type="term" value="C:chloroplast thylakoid membrane"/>
    <property type="evidence" value="ECO:0007669"/>
    <property type="project" value="UniProtKB-SubCell"/>
</dbReference>
<dbReference type="GO" id="GO:0005886">
    <property type="term" value="C:plasma membrane"/>
    <property type="evidence" value="ECO:0007669"/>
    <property type="project" value="UniProtKB-UniRule"/>
</dbReference>
<dbReference type="GO" id="GO:0045259">
    <property type="term" value="C:proton-transporting ATP synthase complex"/>
    <property type="evidence" value="ECO:0007669"/>
    <property type="project" value="UniProtKB-KW"/>
</dbReference>
<dbReference type="GO" id="GO:0046933">
    <property type="term" value="F:proton-transporting ATP synthase activity, rotational mechanism"/>
    <property type="evidence" value="ECO:0007669"/>
    <property type="project" value="UniProtKB-UniRule"/>
</dbReference>
<dbReference type="CDD" id="cd00310">
    <property type="entry name" value="ATP-synt_Fo_a_6"/>
    <property type="match status" value="1"/>
</dbReference>
<dbReference type="FunFam" id="1.20.120.220:FF:000001">
    <property type="entry name" value="ATP synthase subunit a, chloroplastic"/>
    <property type="match status" value="1"/>
</dbReference>
<dbReference type="Gene3D" id="1.20.120.220">
    <property type="entry name" value="ATP synthase, F0 complex, subunit A"/>
    <property type="match status" value="1"/>
</dbReference>
<dbReference type="HAMAP" id="MF_01393">
    <property type="entry name" value="ATP_synth_a_bact"/>
    <property type="match status" value="1"/>
</dbReference>
<dbReference type="InterPro" id="IPR045082">
    <property type="entry name" value="ATP_syn_F0_a_bact/chloroplast"/>
</dbReference>
<dbReference type="InterPro" id="IPR000568">
    <property type="entry name" value="ATP_synth_F0_asu"/>
</dbReference>
<dbReference type="InterPro" id="IPR023011">
    <property type="entry name" value="ATP_synth_F0_asu_AS"/>
</dbReference>
<dbReference type="InterPro" id="IPR035908">
    <property type="entry name" value="F0_ATP_A_sf"/>
</dbReference>
<dbReference type="NCBIfam" id="TIGR01131">
    <property type="entry name" value="ATP_synt_6_or_A"/>
    <property type="match status" value="1"/>
</dbReference>
<dbReference type="PANTHER" id="PTHR42823">
    <property type="entry name" value="ATP SYNTHASE SUBUNIT A, CHLOROPLASTIC"/>
    <property type="match status" value="1"/>
</dbReference>
<dbReference type="PANTHER" id="PTHR42823:SF3">
    <property type="entry name" value="ATP SYNTHASE SUBUNIT A, CHLOROPLASTIC"/>
    <property type="match status" value="1"/>
</dbReference>
<dbReference type="Pfam" id="PF00119">
    <property type="entry name" value="ATP-synt_A"/>
    <property type="match status" value="1"/>
</dbReference>
<dbReference type="PRINTS" id="PR00123">
    <property type="entry name" value="ATPASEA"/>
</dbReference>
<dbReference type="SUPFAM" id="SSF81336">
    <property type="entry name" value="F1F0 ATP synthase subunit A"/>
    <property type="match status" value="1"/>
</dbReference>
<dbReference type="PROSITE" id="PS00449">
    <property type="entry name" value="ATPASE_A"/>
    <property type="match status" value="1"/>
</dbReference>
<gene>
    <name evidence="1" type="primary">atpI</name>
</gene>
<comment type="function">
    <text evidence="1">Key component of the proton channel; it plays a direct role in the translocation of protons across the membrane.</text>
</comment>
<comment type="subunit">
    <text evidence="1">F-type ATPases have 2 components, CF(1) - the catalytic core - and CF(0) - the membrane proton channel. CF(1) has five subunits: alpha(3), beta(3), gamma(1), delta(1), epsilon(1). CF(0) has four main subunits: a, b, b' and c.</text>
</comment>
<comment type="subcellular location">
    <subcellularLocation>
        <location evidence="1">Plastid</location>
        <location evidence="1">Chloroplast thylakoid membrane</location>
        <topology evidence="1">Multi-pass membrane protein</topology>
    </subcellularLocation>
</comment>
<comment type="similarity">
    <text evidence="1">Belongs to the ATPase A chain family.</text>
</comment>
<proteinExistence type="inferred from homology"/>